<proteinExistence type="evidence at protein level"/>
<keyword id="KW-0067">ATP-binding</keyword>
<keyword id="KW-1003">Cell membrane</keyword>
<keyword id="KW-0168">Coated pit</keyword>
<keyword id="KW-0175">Coiled coil</keyword>
<keyword id="KW-0963">Cytoplasm</keyword>
<keyword id="KW-0254">Endocytosis</keyword>
<keyword id="KW-0418">Kinase</keyword>
<keyword id="KW-0443">Lipid metabolism</keyword>
<keyword id="KW-0472">Membrane</keyword>
<keyword id="KW-0479">Metal-binding</keyword>
<keyword id="KW-0547">Nucleotide-binding</keyword>
<keyword id="KW-0597">Phosphoprotein</keyword>
<keyword id="KW-0653">Protein transport</keyword>
<keyword id="KW-1185">Reference proteome</keyword>
<keyword id="KW-0677">Repeat</keyword>
<keyword id="KW-0808">Transferase</keyword>
<keyword id="KW-0813">Transport</keyword>
<keyword id="KW-0862">Zinc</keyword>
<keyword id="KW-0863">Zinc-finger</keyword>
<organism>
    <name type="scientific">Mus musculus</name>
    <name type="common">Mouse</name>
    <dbReference type="NCBI Taxonomy" id="10090"/>
    <lineage>
        <taxon>Eukaryota</taxon>
        <taxon>Metazoa</taxon>
        <taxon>Chordata</taxon>
        <taxon>Craniata</taxon>
        <taxon>Vertebrata</taxon>
        <taxon>Euteleostomi</taxon>
        <taxon>Mammalia</taxon>
        <taxon>Eutheria</taxon>
        <taxon>Euarchontoglires</taxon>
        <taxon>Glires</taxon>
        <taxon>Rodentia</taxon>
        <taxon>Myomorpha</taxon>
        <taxon>Muroidea</taxon>
        <taxon>Muridae</taxon>
        <taxon>Murinae</taxon>
        <taxon>Mus</taxon>
        <taxon>Mus</taxon>
    </lineage>
</organism>
<protein>
    <recommendedName>
        <fullName evidence="8">Diacylglycerol kinase delta</fullName>
        <shortName>DAG kinase delta</shortName>
        <ecNumber evidence="7">2.7.1.107</ecNumber>
    </recommendedName>
</protein>
<name>DGKD_MOUSE</name>
<comment type="function">
    <text evidence="1 7">Diacylglycerol kinase that converts diacylglycerol/DAG into phosphatidic acid/phosphatidate/PA and regulates the respective levels of these two bioactive lipids (PubMed:17021016). Thereby, acts as a central switch between the signaling pathways activated by these second messengers with different cellular targets and opposite effects in numerous biological processes (PubMed:17021016). By controlling the levels of diacylglycerol, regulates for instance the PKC and EGF receptor signaling pathways and plays a crucial role during development (PubMed:17021016). May also regulate clathrin-dependent endocytosis (By similarity).</text>
</comment>
<comment type="catalytic activity">
    <reaction evidence="7">
        <text>a 1,2-diacyl-sn-glycerol + ATP = a 1,2-diacyl-sn-glycero-3-phosphate + ADP + H(+)</text>
        <dbReference type="Rhea" id="RHEA:10272"/>
        <dbReference type="ChEBI" id="CHEBI:15378"/>
        <dbReference type="ChEBI" id="CHEBI:17815"/>
        <dbReference type="ChEBI" id="CHEBI:30616"/>
        <dbReference type="ChEBI" id="CHEBI:58608"/>
        <dbReference type="ChEBI" id="CHEBI:456216"/>
        <dbReference type="EC" id="2.7.1.107"/>
    </reaction>
    <physiologicalReaction direction="left-to-right" evidence="7">
        <dbReference type="Rhea" id="RHEA:10273"/>
    </physiologicalReaction>
</comment>
<comment type="catalytic activity">
    <reaction evidence="1">
        <text>1,2-di-(9Z-octadecenoyl)-sn-glycerol + ATP = 1,2-di-(9Z-octadecenoyl)-sn-glycero-3-phosphate + ADP + H(+)</text>
        <dbReference type="Rhea" id="RHEA:40327"/>
        <dbReference type="ChEBI" id="CHEBI:15378"/>
        <dbReference type="ChEBI" id="CHEBI:30616"/>
        <dbReference type="ChEBI" id="CHEBI:52333"/>
        <dbReference type="ChEBI" id="CHEBI:74546"/>
        <dbReference type="ChEBI" id="CHEBI:456216"/>
    </reaction>
    <physiologicalReaction direction="left-to-right" evidence="1">
        <dbReference type="Rhea" id="RHEA:40328"/>
    </physiologicalReaction>
</comment>
<comment type="catalytic activity">
    <reaction evidence="1">
        <text>1-octadecanoyl-2-(5Z,8Z,11Z,14Z-eicosatetraenoyl)-sn-glycerol + ATP = 1-octadecanoyl-2-(5Z,8Z,11Z,14Z-eicosatetraenoyl)-sn-glycero-3-phosphate + ADP + H(+)</text>
        <dbReference type="Rhea" id="RHEA:40323"/>
        <dbReference type="ChEBI" id="CHEBI:15378"/>
        <dbReference type="ChEBI" id="CHEBI:30616"/>
        <dbReference type="ChEBI" id="CHEBI:75728"/>
        <dbReference type="ChEBI" id="CHEBI:77091"/>
        <dbReference type="ChEBI" id="CHEBI:456216"/>
    </reaction>
    <physiologicalReaction direction="left-to-right" evidence="1">
        <dbReference type="Rhea" id="RHEA:40324"/>
    </physiologicalReaction>
</comment>
<comment type="pathway">
    <text evidence="7">Lipid metabolism; glycerolipid metabolism.</text>
</comment>
<comment type="subunit">
    <text evidence="1">Homooligomer. Monomer. Interacts with AP2A2; regulates clathrin-dependent endocytosis.</text>
</comment>
<comment type="subcellular location">
    <subcellularLocation>
        <location evidence="1">Cell membrane</location>
        <topology evidence="1">Peripheral membrane protein</topology>
    </subcellularLocation>
    <subcellularLocation>
        <location evidence="1">Membrane</location>
        <location evidence="1">Clathrin-coated pit</location>
    </subcellularLocation>
    <subcellularLocation>
        <location evidence="1">Cytoplasm</location>
    </subcellularLocation>
</comment>
<comment type="tissue specificity">
    <text evidence="7">Widely expressed.</text>
</comment>
<comment type="domain">
    <text evidence="1">The SAM domain mediates homooligomerization.</text>
</comment>
<comment type="domain">
    <text evidence="1">The PH domain mediates association with membranes.</text>
</comment>
<comment type="disruption phenotype">
    <text evidence="7">Homozygous knockout of dgkd is lethal (PubMed:17021016). Fetuses are smaller and newborn mice develop respiratory difficulty and die within 24 hours after birth (PubMed:17021016). They show an abnormal open-eyelids phenotype which is associated with significant reduction of the expression of the EGF receptor/EGFR in the basal layer of the epidermis (PubMed:17021016).</text>
</comment>
<comment type="similarity">
    <text evidence="8">Belongs to the eukaryotic diacylglycerol kinase family.</text>
</comment>
<reference key="1">
    <citation type="journal article" date="2009" name="PLoS Biol.">
        <title>Lineage-specific biology revealed by a finished genome assembly of the mouse.</title>
        <authorList>
            <person name="Church D.M."/>
            <person name="Goodstadt L."/>
            <person name="Hillier L.W."/>
            <person name="Zody M.C."/>
            <person name="Goldstein S."/>
            <person name="She X."/>
            <person name="Bult C.J."/>
            <person name="Agarwala R."/>
            <person name="Cherry J.L."/>
            <person name="DiCuccio M."/>
            <person name="Hlavina W."/>
            <person name="Kapustin Y."/>
            <person name="Meric P."/>
            <person name="Maglott D."/>
            <person name="Birtle Z."/>
            <person name="Marques A.C."/>
            <person name="Graves T."/>
            <person name="Zhou S."/>
            <person name="Teague B."/>
            <person name="Potamousis K."/>
            <person name="Churas C."/>
            <person name="Place M."/>
            <person name="Herschleb J."/>
            <person name="Runnheim R."/>
            <person name="Forrest D."/>
            <person name="Amos-Landgraf J."/>
            <person name="Schwartz D.C."/>
            <person name="Cheng Z."/>
            <person name="Lindblad-Toh K."/>
            <person name="Eichler E.E."/>
            <person name="Ponting C.P."/>
        </authorList>
    </citation>
    <scope>NUCLEOTIDE SEQUENCE [LARGE SCALE GENOMIC DNA]</scope>
    <source>
        <strain>C57BL/6J</strain>
    </source>
</reference>
<reference key="2">
    <citation type="journal article" date="2010" name="Cell">
        <title>A tissue-specific atlas of mouse protein phosphorylation and expression.</title>
        <authorList>
            <person name="Huttlin E.L."/>
            <person name="Jedrychowski M.P."/>
            <person name="Elias J.E."/>
            <person name="Goswami T."/>
            <person name="Rad R."/>
            <person name="Beausoleil S.A."/>
            <person name="Villen J."/>
            <person name="Haas W."/>
            <person name="Sowa M.E."/>
            <person name="Gygi S.P."/>
        </authorList>
    </citation>
    <scope>IDENTIFICATION BY MASS SPECTROMETRY [LARGE SCALE ANALYSIS]</scope>
</reference>
<reference key="3">
    <citation type="journal article" date="2006" name="Proc. Natl. Acad. Sci. U.S.A.">
        <title>Diacylglycerol kinase delta regulates protein kinase C and epidermal growth factor receptor signaling.</title>
        <authorList>
            <person name="Crotty T."/>
            <person name="Cai J."/>
            <person name="Sakane F."/>
            <person name="Taketomi A."/>
            <person name="Prescott S.M."/>
            <person name="Topham M.K."/>
        </authorList>
    </citation>
    <scope>FUNCTION</scope>
    <scope>CATALYTIC ACTIVITY</scope>
    <scope>PATHWAY</scope>
    <scope>DISRUPTION PHENOTYPE</scope>
    <scope>TISSUE SPECIFICITY</scope>
</reference>
<reference key="4">
    <citation type="journal article" date="2014" name="Mol. Cell. Proteomics">
        <title>Immunoaffinity enrichment and mass spectrometry analysis of protein methylation.</title>
        <authorList>
            <person name="Guo A."/>
            <person name="Gu H."/>
            <person name="Zhou J."/>
            <person name="Mulhern D."/>
            <person name="Wang Y."/>
            <person name="Lee K.A."/>
            <person name="Yang V."/>
            <person name="Aguiar M."/>
            <person name="Kornhauser J."/>
            <person name="Jia X."/>
            <person name="Ren J."/>
            <person name="Beausoleil S.A."/>
            <person name="Silva J.C."/>
            <person name="Vemulapalli V."/>
            <person name="Bedford M.T."/>
            <person name="Comb M.J."/>
        </authorList>
    </citation>
    <scope>IDENTIFICATION BY MASS SPECTROMETRY [LARGE SCALE ANALYSIS]</scope>
</reference>
<accession>E9PUQ8</accession>
<dbReference type="EC" id="2.7.1.107" evidence="7"/>
<dbReference type="EMBL" id="AC102630">
    <property type="status" value="NOT_ANNOTATED_CDS"/>
    <property type="molecule type" value="Genomic_DNA"/>
</dbReference>
<dbReference type="EMBL" id="AC162281">
    <property type="status" value="NOT_ANNOTATED_CDS"/>
    <property type="molecule type" value="Genomic_DNA"/>
</dbReference>
<dbReference type="CCDS" id="CCDS48312.1"/>
<dbReference type="RefSeq" id="NP_808314.2">
    <property type="nucleotide sequence ID" value="NM_177646.3"/>
</dbReference>
<dbReference type="SMR" id="E9PUQ8"/>
<dbReference type="FunCoup" id="E9PUQ8">
    <property type="interactions" value="2191"/>
</dbReference>
<dbReference type="STRING" id="10090.ENSMUSP00000027517"/>
<dbReference type="GlyGen" id="E9PUQ8">
    <property type="glycosylation" value="2 sites, 1 N-linked glycan (1 site), 1 O-linked glycan (1 site)"/>
</dbReference>
<dbReference type="iPTMnet" id="E9PUQ8"/>
<dbReference type="PhosphoSitePlus" id="E9PUQ8"/>
<dbReference type="PaxDb" id="10090-ENSMUSP00000027517"/>
<dbReference type="PeptideAtlas" id="E9PUQ8"/>
<dbReference type="ProteomicsDB" id="320440"/>
<dbReference type="Pumba" id="E9PUQ8"/>
<dbReference type="Antibodypedia" id="34452">
    <property type="antibodies" value="164 antibodies from 28 providers"/>
</dbReference>
<dbReference type="Ensembl" id="ENSMUST00000027517.14">
    <property type="protein sequence ID" value="ENSMUSP00000027517.8"/>
    <property type="gene ID" value="ENSMUSG00000070738.11"/>
</dbReference>
<dbReference type="GeneID" id="227333"/>
<dbReference type="KEGG" id="mmu:227333"/>
<dbReference type="UCSC" id="uc011wos.1">
    <property type="organism name" value="mouse"/>
</dbReference>
<dbReference type="AGR" id="MGI:2138334"/>
<dbReference type="CTD" id="8527"/>
<dbReference type="MGI" id="MGI:2138334">
    <property type="gene designation" value="Dgkd"/>
</dbReference>
<dbReference type="VEuPathDB" id="HostDB:ENSMUSG00000070738"/>
<dbReference type="eggNOG" id="KOG1170">
    <property type="taxonomic scope" value="Eukaryota"/>
</dbReference>
<dbReference type="GeneTree" id="ENSGT00940000159041"/>
<dbReference type="HOGENOM" id="CLU_001799_3_0_1"/>
<dbReference type="InParanoid" id="E9PUQ8"/>
<dbReference type="OMA" id="SKAPCEK"/>
<dbReference type="OrthoDB" id="196165at2759"/>
<dbReference type="PhylomeDB" id="E9PUQ8"/>
<dbReference type="TreeFam" id="TF313104"/>
<dbReference type="BRENDA" id="2.7.1.107">
    <property type="organism ID" value="3474"/>
</dbReference>
<dbReference type="Reactome" id="R-MMU-114508">
    <property type="pathway name" value="Effects of PIP2 hydrolysis"/>
</dbReference>
<dbReference type="UniPathway" id="UPA00230"/>
<dbReference type="BioGRID-ORCS" id="227333">
    <property type="hits" value="4 hits in 77 CRISPR screens"/>
</dbReference>
<dbReference type="ChiTaRS" id="Dgkq">
    <property type="organism name" value="mouse"/>
</dbReference>
<dbReference type="PRO" id="PR:E9PUQ8"/>
<dbReference type="Proteomes" id="UP000000589">
    <property type="component" value="Chromosome 1"/>
</dbReference>
<dbReference type="RNAct" id="E9PUQ8">
    <property type="molecule type" value="protein"/>
</dbReference>
<dbReference type="Bgee" id="ENSMUSG00000070738">
    <property type="expression patterns" value="Expressed in spermatocyte and 233 other cell types or tissues"/>
</dbReference>
<dbReference type="ExpressionAtlas" id="E9PUQ8">
    <property type="expression patterns" value="baseline and differential"/>
</dbReference>
<dbReference type="GO" id="GO:0005905">
    <property type="term" value="C:clathrin-coated pit"/>
    <property type="evidence" value="ECO:0000250"/>
    <property type="project" value="UniProtKB"/>
</dbReference>
<dbReference type="GO" id="GO:0031410">
    <property type="term" value="C:cytoplasmic vesicle"/>
    <property type="evidence" value="ECO:0000266"/>
    <property type="project" value="MGI"/>
</dbReference>
<dbReference type="GO" id="GO:0005829">
    <property type="term" value="C:cytosol"/>
    <property type="evidence" value="ECO:0000250"/>
    <property type="project" value="UniProtKB"/>
</dbReference>
<dbReference type="GO" id="GO:0005886">
    <property type="term" value="C:plasma membrane"/>
    <property type="evidence" value="ECO:0000250"/>
    <property type="project" value="UniProtKB"/>
</dbReference>
<dbReference type="GO" id="GO:0005524">
    <property type="term" value="F:ATP binding"/>
    <property type="evidence" value="ECO:0007669"/>
    <property type="project" value="UniProtKB-KW"/>
</dbReference>
<dbReference type="GO" id="GO:0004143">
    <property type="term" value="F:ATP-dependent diacylglycerol kinase activity"/>
    <property type="evidence" value="ECO:0000315"/>
    <property type="project" value="UniProtKB"/>
</dbReference>
<dbReference type="GO" id="GO:0042802">
    <property type="term" value="F:identical protein binding"/>
    <property type="evidence" value="ECO:0000250"/>
    <property type="project" value="UniProtKB"/>
</dbReference>
<dbReference type="GO" id="GO:0019900">
    <property type="term" value="F:kinase binding"/>
    <property type="evidence" value="ECO:0007669"/>
    <property type="project" value="Ensembl"/>
</dbReference>
<dbReference type="GO" id="GO:0046982">
    <property type="term" value="F:protein heterodimerization activity"/>
    <property type="evidence" value="ECO:0000266"/>
    <property type="project" value="MGI"/>
</dbReference>
<dbReference type="GO" id="GO:0042803">
    <property type="term" value="F:protein homodimerization activity"/>
    <property type="evidence" value="ECO:0000266"/>
    <property type="project" value="MGI"/>
</dbReference>
<dbReference type="GO" id="GO:0008270">
    <property type="term" value="F:zinc ion binding"/>
    <property type="evidence" value="ECO:0007669"/>
    <property type="project" value="UniProtKB-KW"/>
</dbReference>
<dbReference type="GO" id="GO:0046340">
    <property type="term" value="P:diacylglycerol catabolic process"/>
    <property type="evidence" value="ECO:0000315"/>
    <property type="project" value="UniProtKB"/>
</dbReference>
<dbReference type="GO" id="GO:0046339">
    <property type="term" value="P:diacylglycerol metabolic process"/>
    <property type="evidence" value="ECO:0000250"/>
    <property type="project" value="UniProtKB"/>
</dbReference>
<dbReference type="GO" id="GO:0006897">
    <property type="term" value="P:endocytosis"/>
    <property type="evidence" value="ECO:0007669"/>
    <property type="project" value="UniProtKB-KW"/>
</dbReference>
<dbReference type="GO" id="GO:0046834">
    <property type="term" value="P:lipid phosphorylation"/>
    <property type="evidence" value="ECO:0000250"/>
    <property type="project" value="UniProtKB"/>
</dbReference>
<dbReference type="GO" id="GO:0160195">
    <property type="term" value="P:negative regulation of phospholipase C/protein kinase C signal transduction"/>
    <property type="evidence" value="ECO:0000315"/>
    <property type="project" value="UniProtKB"/>
</dbReference>
<dbReference type="GO" id="GO:0006654">
    <property type="term" value="P:phosphatidic acid biosynthetic process"/>
    <property type="evidence" value="ECO:0000250"/>
    <property type="project" value="UniProtKB"/>
</dbReference>
<dbReference type="GO" id="GO:0007200">
    <property type="term" value="P:phospholipase C-activating G protein-coupled receptor signaling pathway"/>
    <property type="evidence" value="ECO:0007669"/>
    <property type="project" value="InterPro"/>
</dbReference>
<dbReference type="GO" id="GO:2000370">
    <property type="term" value="P:positive regulation of clathrin-dependent endocytosis"/>
    <property type="evidence" value="ECO:0000250"/>
    <property type="project" value="UniProtKB"/>
</dbReference>
<dbReference type="GO" id="GO:0045742">
    <property type="term" value="P:positive regulation of epidermal growth factor receptor signaling pathway"/>
    <property type="evidence" value="ECO:0000315"/>
    <property type="project" value="UniProtKB"/>
</dbReference>
<dbReference type="GO" id="GO:0015031">
    <property type="term" value="P:protein transport"/>
    <property type="evidence" value="ECO:0007669"/>
    <property type="project" value="UniProtKB-KW"/>
</dbReference>
<dbReference type="CDD" id="cd20847">
    <property type="entry name" value="C1_DGKdelta_rpt1"/>
    <property type="match status" value="1"/>
</dbReference>
<dbReference type="CDD" id="cd20893">
    <property type="entry name" value="C1_DGKdelta_rpt2"/>
    <property type="match status" value="1"/>
</dbReference>
<dbReference type="CDD" id="cd13274">
    <property type="entry name" value="PH_DGK_type2"/>
    <property type="match status" value="1"/>
</dbReference>
<dbReference type="CDD" id="cd09575">
    <property type="entry name" value="SAM_DGK-delta"/>
    <property type="match status" value="1"/>
</dbReference>
<dbReference type="FunFam" id="1.10.150.50:FF:000021">
    <property type="entry name" value="Diacylglycerol kinase"/>
    <property type="match status" value="1"/>
</dbReference>
<dbReference type="FunFam" id="2.30.29.30:FF:000060">
    <property type="entry name" value="Diacylglycerol kinase"/>
    <property type="match status" value="1"/>
</dbReference>
<dbReference type="FunFam" id="2.60.200.40:FF:000001">
    <property type="entry name" value="Diacylglycerol kinase"/>
    <property type="match status" value="1"/>
</dbReference>
<dbReference type="FunFam" id="3.30.60.20:FF:000002">
    <property type="entry name" value="Diacylglycerol kinase"/>
    <property type="match status" value="1"/>
</dbReference>
<dbReference type="FunFam" id="3.30.60.20:FF:000029">
    <property type="entry name" value="Diacylglycerol kinase"/>
    <property type="match status" value="1"/>
</dbReference>
<dbReference type="FunFam" id="3.40.50.10330:FF:000001">
    <property type="entry name" value="Diacylglycerol kinase"/>
    <property type="match status" value="1"/>
</dbReference>
<dbReference type="Gene3D" id="2.60.200.40">
    <property type="match status" value="1"/>
</dbReference>
<dbReference type="Gene3D" id="3.30.60.20">
    <property type="match status" value="2"/>
</dbReference>
<dbReference type="Gene3D" id="2.30.29.30">
    <property type="entry name" value="Pleckstrin-homology domain (PH domain)/Phosphotyrosine-binding domain (PTB)"/>
    <property type="match status" value="1"/>
</dbReference>
<dbReference type="Gene3D" id="3.40.50.10330">
    <property type="entry name" value="Probable inorganic polyphosphate/atp-NAD kinase, domain 1"/>
    <property type="match status" value="1"/>
</dbReference>
<dbReference type="Gene3D" id="1.10.150.50">
    <property type="entry name" value="Transcription Factor, Ets-1"/>
    <property type="match status" value="1"/>
</dbReference>
<dbReference type="InterPro" id="IPR017438">
    <property type="entry name" value="ATP-NAD_kinase_N"/>
</dbReference>
<dbReference type="InterPro" id="IPR046349">
    <property type="entry name" value="C1-like_sf"/>
</dbReference>
<dbReference type="InterPro" id="IPR047478">
    <property type="entry name" value="C1_DGKdelta_rpt1"/>
</dbReference>
<dbReference type="InterPro" id="IPR047477">
    <property type="entry name" value="C1_DGKdelta_rpt2"/>
</dbReference>
<dbReference type="InterPro" id="IPR037607">
    <property type="entry name" value="DGK"/>
</dbReference>
<dbReference type="InterPro" id="IPR037606">
    <property type="entry name" value="DGK-delta_SAM"/>
</dbReference>
<dbReference type="InterPro" id="IPR054474">
    <property type="entry name" value="DGKD_4H"/>
</dbReference>
<dbReference type="InterPro" id="IPR000756">
    <property type="entry name" value="Diacylglycerol_kin_accessory"/>
</dbReference>
<dbReference type="InterPro" id="IPR001206">
    <property type="entry name" value="Diacylglycerol_kinase_cat_dom"/>
</dbReference>
<dbReference type="InterPro" id="IPR016064">
    <property type="entry name" value="NAD/diacylglycerol_kinase_sf"/>
</dbReference>
<dbReference type="InterPro" id="IPR002219">
    <property type="entry name" value="PE/DAG-bd"/>
</dbReference>
<dbReference type="InterPro" id="IPR011993">
    <property type="entry name" value="PH-like_dom_sf"/>
</dbReference>
<dbReference type="InterPro" id="IPR001849">
    <property type="entry name" value="PH_domain"/>
</dbReference>
<dbReference type="InterPro" id="IPR001660">
    <property type="entry name" value="SAM"/>
</dbReference>
<dbReference type="InterPro" id="IPR013761">
    <property type="entry name" value="SAM/pointed_sf"/>
</dbReference>
<dbReference type="PANTHER" id="PTHR11255">
    <property type="entry name" value="DIACYLGLYCEROL KINASE"/>
    <property type="match status" value="1"/>
</dbReference>
<dbReference type="PANTHER" id="PTHR11255:SF30">
    <property type="entry name" value="DIACYLGLYCEROL KINASE DELTA"/>
    <property type="match status" value="1"/>
</dbReference>
<dbReference type="Pfam" id="PF00130">
    <property type="entry name" value="C1_1"/>
    <property type="match status" value="2"/>
</dbReference>
<dbReference type="Pfam" id="PF00609">
    <property type="entry name" value="DAGK_acc"/>
    <property type="match status" value="1"/>
</dbReference>
<dbReference type="Pfam" id="PF00781">
    <property type="entry name" value="DAGK_cat"/>
    <property type="match status" value="1"/>
</dbReference>
<dbReference type="Pfam" id="PF22944">
    <property type="entry name" value="DGKD_4H"/>
    <property type="match status" value="1"/>
</dbReference>
<dbReference type="Pfam" id="PF00169">
    <property type="entry name" value="PH"/>
    <property type="match status" value="1"/>
</dbReference>
<dbReference type="Pfam" id="PF07647">
    <property type="entry name" value="SAM_2"/>
    <property type="match status" value="1"/>
</dbReference>
<dbReference type="SMART" id="SM00109">
    <property type="entry name" value="C1"/>
    <property type="match status" value="2"/>
</dbReference>
<dbReference type="SMART" id="SM00045">
    <property type="entry name" value="DAGKa"/>
    <property type="match status" value="1"/>
</dbReference>
<dbReference type="SMART" id="SM00046">
    <property type="entry name" value="DAGKc"/>
    <property type="match status" value="1"/>
</dbReference>
<dbReference type="SMART" id="SM00233">
    <property type="entry name" value="PH"/>
    <property type="match status" value="1"/>
</dbReference>
<dbReference type="SMART" id="SM00454">
    <property type="entry name" value="SAM"/>
    <property type="match status" value="1"/>
</dbReference>
<dbReference type="SUPFAM" id="SSF57889">
    <property type="entry name" value="Cysteine-rich domain"/>
    <property type="match status" value="2"/>
</dbReference>
<dbReference type="SUPFAM" id="SSF111331">
    <property type="entry name" value="NAD kinase/diacylglycerol kinase-like"/>
    <property type="match status" value="1"/>
</dbReference>
<dbReference type="SUPFAM" id="SSF50729">
    <property type="entry name" value="PH domain-like"/>
    <property type="match status" value="1"/>
</dbReference>
<dbReference type="SUPFAM" id="SSF47769">
    <property type="entry name" value="SAM/Pointed domain"/>
    <property type="match status" value="1"/>
</dbReference>
<dbReference type="PROSITE" id="PS50146">
    <property type="entry name" value="DAGK"/>
    <property type="match status" value="1"/>
</dbReference>
<dbReference type="PROSITE" id="PS50003">
    <property type="entry name" value="PH_DOMAIN"/>
    <property type="match status" value="1"/>
</dbReference>
<dbReference type="PROSITE" id="PS50105">
    <property type="entry name" value="SAM_DOMAIN"/>
    <property type="match status" value="1"/>
</dbReference>
<dbReference type="PROSITE" id="PS00479">
    <property type="entry name" value="ZF_DAG_PE_1"/>
    <property type="match status" value="2"/>
</dbReference>
<dbReference type="PROSITE" id="PS50081">
    <property type="entry name" value="ZF_DAG_PE_2"/>
    <property type="match status" value="2"/>
</dbReference>
<sequence length="1220" mass="135208">MAAAAGAPPPGPPQPPPPPPPEESSDSEPEAEPGSPQKLIRKVSTSGQIRQKTILKEGMLTKQNNSFQRSKRRYFKLRGRTLYYAKTAKSIIFDEVDLTDASVAESSTKNVNNSFTVITPCRKLILCADNRKEMEDWIAALKTVQNKEHFEPTQYSMDHFSGMHNWYACSHARPTYCNVCREVLSGVTSHGLSCEVCKFKAHKRCAVRATSNCKWTTLASIGKDIIEDEDGIAMPHQWLEGNLPVSAKCIVCDKTCGSVLRLQDWRCLWCKAMVHTSCKESLVMKCPLGLCKVSVIPPTALNSIDSDGFWKATCPPSCTSPLLVFVNSKSGDNQGVKFLRRFKQLLNPAQVFDLMNGGPHLGLRLFQKFDTFRILVCGGDGSVGWVLSEIDSLNLHKQCQLGVLPLGTGNDLARVLGWGSACDDDTQLPQILAKLERASTKMLDRWSVMAYETKLPRQASSSTVTEDFSEDSEVQQILFYEDSVAAHLSKILTSDQHSVVISSAKVLCETVKDFVARVGKAYEKTTESSQESEVMAKKCSVLKEKLDSLLKTLDDESQASSSLSNPPPTIAEEAEDGDGSGNICSSTGDHLVGSACPSRPQIFRPREQLMLRANSLKKAIRQIIEHTEKAVDEQNAQTQEQQGFVLGLSESEKKDLKTDNRVCTSSVHSESCVIAKGRSQRKASRAPCEKLVSKGLSLGSSASLPPGTGSRDSLPALNTKILYPSVRAGMSGSLPGGSVISRLLINADPFNAEPENLEYYTEKCVMNNYFGIGLDAKISLDFNNKRDEHPEKCRSRTKNMMWYGVLGTKELLHRTYRNLEQKVLLECDGRPIPLPSLQGIAVLNIPSYAGGTNFWGGTKEDDTFAAPSFDDKILEVVAVFGSMQMAVSRVIKLQHHRIAQCRTVKISILGDEGVPVQVDGEAWIQPPGYIRIVHKNRAQTLTRDRAFENTLKSWEDKQKCELSRPPSFSLHPEILSEEEATQMDQFGQAAGGLIHSIREIAQSHRAMEQELAHAVNASSKAMERVYGKPRTAEGLNCSFVLEMVNNIRALRSETELLLAGKMALQLDPPQKERLGAALIEMDQQLRKLTDTPWLCQPLEPGEEESLQQNVMLDLTKRSRSGKFRLVTKFKKEKNNKNKEVHSNLGGPVHLWGTEEVAAWLEHLSLCEYKDIFTRHDIRGSELLHLERRDLKDLGVTKVGHMKRILCGIKELSRSSPAAEA</sequence>
<gene>
    <name evidence="9" type="primary">Dgkd</name>
</gene>
<feature type="chain" id="PRO_0000450663" description="Diacylglycerol kinase delta">
    <location>
        <begin position="1"/>
        <end position="1220"/>
    </location>
</feature>
<feature type="domain" description="PH" evidence="2">
    <location>
        <begin position="53"/>
        <end position="146"/>
    </location>
</feature>
<feature type="domain" description="DAGKc" evidence="5">
    <location>
        <begin position="317"/>
        <end position="451"/>
    </location>
</feature>
<feature type="domain" description="SAM" evidence="3">
    <location>
        <begin position="1151"/>
        <end position="1214"/>
    </location>
</feature>
<feature type="zinc finger region" description="Phorbol-ester/DAG-type 1" evidence="4">
    <location>
        <begin position="163"/>
        <end position="213"/>
    </location>
</feature>
<feature type="zinc finger region" description="Phorbol-ester/DAG-type 2" evidence="4">
    <location>
        <begin position="235"/>
        <end position="286"/>
    </location>
</feature>
<feature type="region of interest" description="Regulates association with membranes" evidence="1">
    <location>
        <begin position="1"/>
        <end position="52"/>
    </location>
</feature>
<feature type="region of interest" description="Disordered" evidence="6">
    <location>
        <begin position="1"/>
        <end position="47"/>
    </location>
</feature>
<feature type="region of interest" description="Disordered" evidence="6">
    <location>
        <begin position="554"/>
        <end position="584"/>
    </location>
</feature>
<feature type="compositionally biased region" description="Pro residues" evidence="6">
    <location>
        <begin position="7"/>
        <end position="22"/>
    </location>
</feature>
<evidence type="ECO:0000250" key="1">
    <source>
        <dbReference type="UniProtKB" id="Q16760"/>
    </source>
</evidence>
<evidence type="ECO:0000255" key="2">
    <source>
        <dbReference type="PROSITE-ProRule" id="PRU00145"/>
    </source>
</evidence>
<evidence type="ECO:0000255" key="3">
    <source>
        <dbReference type="PROSITE-ProRule" id="PRU00184"/>
    </source>
</evidence>
<evidence type="ECO:0000255" key="4">
    <source>
        <dbReference type="PROSITE-ProRule" id="PRU00226"/>
    </source>
</evidence>
<evidence type="ECO:0000255" key="5">
    <source>
        <dbReference type="PROSITE-ProRule" id="PRU00783"/>
    </source>
</evidence>
<evidence type="ECO:0000256" key="6">
    <source>
        <dbReference type="SAM" id="MobiDB-lite"/>
    </source>
</evidence>
<evidence type="ECO:0000269" key="7">
    <source>
    </source>
</evidence>
<evidence type="ECO:0000305" key="8"/>
<evidence type="ECO:0000312" key="9">
    <source>
        <dbReference type="MGI" id="MGI:2138334"/>
    </source>
</evidence>